<proteinExistence type="evidence at transcript level"/>
<accession>A6NK75</accession>
<feature type="chain" id="PRO_0000316948" description="Zinc finger protein 98">
    <location>
        <begin position="1"/>
        <end position="572"/>
    </location>
</feature>
<feature type="domain" description="KRAB" evidence="2">
    <location>
        <begin position="13"/>
        <end position="84"/>
    </location>
</feature>
<feature type="zinc finger region" description="C2H2-type 1" evidence="1">
    <location>
        <begin position="182"/>
        <end position="204"/>
    </location>
</feature>
<feature type="zinc finger region" description="C2H2-type 2" evidence="1">
    <location>
        <begin position="210"/>
        <end position="232"/>
    </location>
</feature>
<feature type="zinc finger region" description="C2H2-type 3" evidence="1">
    <location>
        <begin position="238"/>
        <end position="260"/>
    </location>
</feature>
<feature type="zinc finger region" description="C2H2-type 4" evidence="1">
    <location>
        <begin position="266"/>
        <end position="288"/>
    </location>
</feature>
<feature type="zinc finger region" description="C2H2-type 5" evidence="1">
    <location>
        <begin position="294"/>
        <end position="316"/>
    </location>
</feature>
<feature type="zinc finger region" description="C2H2-type 6" evidence="1">
    <location>
        <begin position="322"/>
        <end position="344"/>
    </location>
</feature>
<feature type="zinc finger region" description="C2H2-type 7" evidence="1">
    <location>
        <begin position="350"/>
        <end position="372"/>
    </location>
</feature>
<feature type="zinc finger region" description="C2H2-type 8" evidence="1">
    <location>
        <begin position="378"/>
        <end position="400"/>
    </location>
</feature>
<feature type="zinc finger region" description="C2H2-type 9" evidence="1">
    <location>
        <begin position="406"/>
        <end position="428"/>
    </location>
</feature>
<feature type="zinc finger region" description="C2H2-type 10" evidence="1">
    <location>
        <begin position="434"/>
        <end position="456"/>
    </location>
</feature>
<feature type="zinc finger region" description="C2H2-type 11" evidence="1">
    <location>
        <begin position="462"/>
        <end position="484"/>
    </location>
</feature>
<feature type="zinc finger region" description="C2H2-type 12" evidence="1">
    <location>
        <begin position="490"/>
        <end position="512"/>
    </location>
</feature>
<feature type="zinc finger region" description="C2H2-type 13" evidence="1">
    <location>
        <begin position="518"/>
        <end position="540"/>
    </location>
</feature>
<feature type="sequence conflict" description="In Ref. 3; AAI10577/AAI29811." evidence="3" ref="3">
    <original>K</original>
    <variation>E</variation>
    <location>
        <position position="407"/>
    </location>
</feature>
<keyword id="KW-0238">DNA-binding</keyword>
<keyword id="KW-0479">Metal-binding</keyword>
<keyword id="KW-0539">Nucleus</keyword>
<keyword id="KW-1185">Reference proteome</keyword>
<keyword id="KW-0677">Repeat</keyword>
<keyword id="KW-0804">Transcription</keyword>
<keyword id="KW-0805">Transcription regulation</keyword>
<keyword id="KW-0862">Zinc</keyword>
<keyword id="KW-0863">Zinc-finger</keyword>
<dbReference type="EMBL" id="AC011516">
    <property type="status" value="NOT_ANNOTATED_CDS"/>
    <property type="molecule type" value="Genomic_DNA"/>
</dbReference>
<dbReference type="EMBL" id="BX955247">
    <property type="status" value="NOT_ANNOTATED_CDS"/>
    <property type="molecule type" value="mRNA"/>
</dbReference>
<dbReference type="EMBL" id="BC110576">
    <property type="protein sequence ID" value="AAI10577.1"/>
    <property type="status" value="ALT_INIT"/>
    <property type="molecule type" value="mRNA"/>
</dbReference>
<dbReference type="EMBL" id="BC129810">
    <property type="protein sequence ID" value="AAI29811.1"/>
    <property type="status" value="ALT_INIT"/>
    <property type="molecule type" value="mRNA"/>
</dbReference>
<dbReference type="CCDS" id="CCDS46031.1"/>
<dbReference type="RefSeq" id="NP_001092096.1">
    <property type="nucleotide sequence ID" value="NM_001098626.2"/>
</dbReference>
<dbReference type="SMR" id="A6NK75"/>
<dbReference type="BioGRID" id="127127">
    <property type="interactions" value="1"/>
</dbReference>
<dbReference type="STRING" id="9606.ENSP00000350418"/>
<dbReference type="iPTMnet" id="A6NK75"/>
<dbReference type="PhosphoSitePlus" id="A6NK75"/>
<dbReference type="BioMuta" id="ZNF98"/>
<dbReference type="jPOST" id="A6NK75"/>
<dbReference type="MassIVE" id="A6NK75"/>
<dbReference type="PaxDb" id="9606-ENSP00000350418"/>
<dbReference type="PeptideAtlas" id="A6NK75"/>
<dbReference type="ProteomicsDB" id="1384"/>
<dbReference type="Antibodypedia" id="55050">
    <property type="antibodies" value="83 antibodies from 12 providers"/>
</dbReference>
<dbReference type="DNASU" id="148198"/>
<dbReference type="Ensembl" id="ENST00000357774.9">
    <property type="protein sequence ID" value="ENSP00000350418.4"/>
    <property type="gene ID" value="ENSG00000197360.9"/>
</dbReference>
<dbReference type="GeneID" id="148198"/>
<dbReference type="KEGG" id="hsa:148198"/>
<dbReference type="MANE-Select" id="ENST00000357774.9">
    <property type="protein sequence ID" value="ENSP00000350418.4"/>
    <property type="RefSeq nucleotide sequence ID" value="NM_001098626.2"/>
    <property type="RefSeq protein sequence ID" value="NP_001092096.1"/>
</dbReference>
<dbReference type="UCSC" id="uc002nqt.3">
    <property type="organism name" value="human"/>
</dbReference>
<dbReference type="AGR" id="HGNC:13174"/>
<dbReference type="CTD" id="148198"/>
<dbReference type="DisGeNET" id="148198"/>
<dbReference type="GeneCards" id="ZNF98"/>
<dbReference type="HGNC" id="HGNC:13174">
    <property type="gene designation" value="ZNF98"/>
</dbReference>
<dbReference type="HPA" id="ENSG00000197360">
    <property type="expression patterns" value="Tissue enhanced (pancreas)"/>
</dbReference>
<dbReference type="MIM" id="603980">
    <property type="type" value="gene"/>
</dbReference>
<dbReference type="neXtProt" id="NX_A6NK75"/>
<dbReference type="OpenTargets" id="ENSG00000197360"/>
<dbReference type="VEuPathDB" id="HostDB:ENSG00000197360"/>
<dbReference type="eggNOG" id="KOG1721">
    <property type="taxonomic scope" value="Eukaryota"/>
</dbReference>
<dbReference type="GeneTree" id="ENSGT01130000278311"/>
<dbReference type="HOGENOM" id="CLU_002678_44_0_1"/>
<dbReference type="InParanoid" id="A6NK75"/>
<dbReference type="OMA" id="VKLYNCE"/>
<dbReference type="OrthoDB" id="9535228at2759"/>
<dbReference type="PAN-GO" id="A6NK75">
    <property type="GO annotations" value="3 GO annotations based on evolutionary models"/>
</dbReference>
<dbReference type="PhylomeDB" id="A6NK75"/>
<dbReference type="TreeFam" id="TF342117"/>
<dbReference type="PathwayCommons" id="A6NK75"/>
<dbReference type="SignaLink" id="A6NK75"/>
<dbReference type="BioGRID-ORCS" id="148198">
    <property type="hits" value="102 hits in 1066 CRISPR screens"/>
</dbReference>
<dbReference type="ChiTaRS" id="ZNF98">
    <property type="organism name" value="human"/>
</dbReference>
<dbReference type="GenomeRNAi" id="148198"/>
<dbReference type="Pharos" id="A6NK75">
    <property type="development level" value="Tdark"/>
</dbReference>
<dbReference type="PRO" id="PR:A6NK75"/>
<dbReference type="Proteomes" id="UP000005640">
    <property type="component" value="Chromosome 19"/>
</dbReference>
<dbReference type="RNAct" id="A6NK75">
    <property type="molecule type" value="protein"/>
</dbReference>
<dbReference type="Bgee" id="ENSG00000197360">
    <property type="expression patterns" value="Expressed in male germ line stem cell (sensu Vertebrata) in testis and 93 other cell types or tissues"/>
</dbReference>
<dbReference type="ExpressionAtlas" id="A6NK75">
    <property type="expression patterns" value="baseline and differential"/>
</dbReference>
<dbReference type="GO" id="GO:0005634">
    <property type="term" value="C:nucleus"/>
    <property type="evidence" value="ECO:0007669"/>
    <property type="project" value="UniProtKB-SubCell"/>
</dbReference>
<dbReference type="GO" id="GO:0000981">
    <property type="term" value="F:DNA-binding transcription factor activity, RNA polymerase II-specific"/>
    <property type="evidence" value="ECO:0000318"/>
    <property type="project" value="GO_Central"/>
</dbReference>
<dbReference type="GO" id="GO:0000978">
    <property type="term" value="F:RNA polymerase II cis-regulatory region sequence-specific DNA binding"/>
    <property type="evidence" value="ECO:0000318"/>
    <property type="project" value="GO_Central"/>
</dbReference>
<dbReference type="GO" id="GO:0008270">
    <property type="term" value="F:zinc ion binding"/>
    <property type="evidence" value="ECO:0007669"/>
    <property type="project" value="UniProtKB-KW"/>
</dbReference>
<dbReference type="GO" id="GO:0006355">
    <property type="term" value="P:regulation of DNA-templated transcription"/>
    <property type="evidence" value="ECO:0000318"/>
    <property type="project" value="GO_Central"/>
</dbReference>
<dbReference type="CDD" id="cd07765">
    <property type="entry name" value="KRAB_A-box"/>
    <property type="match status" value="1"/>
</dbReference>
<dbReference type="FunFam" id="3.30.160.60:FF:000374">
    <property type="entry name" value="Zinc finger protein 208"/>
    <property type="match status" value="2"/>
</dbReference>
<dbReference type="FunFam" id="3.30.160.60:FF:000034">
    <property type="entry name" value="zinc finger protein 25"/>
    <property type="match status" value="1"/>
</dbReference>
<dbReference type="FunFam" id="3.30.160.60:FF:001868">
    <property type="entry name" value="Zinc finger protein 264"/>
    <property type="match status" value="1"/>
</dbReference>
<dbReference type="FunFam" id="3.30.160.60:FF:000120">
    <property type="entry name" value="Zinc finger protein 430"/>
    <property type="match status" value="7"/>
</dbReference>
<dbReference type="FunFam" id="3.30.160.60:FF:002254">
    <property type="entry name" value="Zinc finger protein 540"/>
    <property type="match status" value="1"/>
</dbReference>
<dbReference type="FunFam" id="3.30.160.60:FF:000895">
    <property type="entry name" value="Zinc finger protein 597"/>
    <property type="match status" value="1"/>
</dbReference>
<dbReference type="Gene3D" id="6.10.140.140">
    <property type="match status" value="1"/>
</dbReference>
<dbReference type="Gene3D" id="3.30.160.60">
    <property type="entry name" value="Classic Zinc Finger"/>
    <property type="match status" value="13"/>
</dbReference>
<dbReference type="InterPro" id="IPR001909">
    <property type="entry name" value="KRAB"/>
</dbReference>
<dbReference type="InterPro" id="IPR036051">
    <property type="entry name" value="KRAB_dom_sf"/>
</dbReference>
<dbReference type="InterPro" id="IPR036236">
    <property type="entry name" value="Znf_C2H2_sf"/>
</dbReference>
<dbReference type="InterPro" id="IPR013087">
    <property type="entry name" value="Znf_C2H2_type"/>
</dbReference>
<dbReference type="PANTHER" id="PTHR23226">
    <property type="entry name" value="ZINC FINGER AND SCAN DOMAIN-CONTAINING"/>
    <property type="match status" value="1"/>
</dbReference>
<dbReference type="PANTHER" id="PTHR23226:SF398">
    <property type="entry name" value="ZINC FINGER PROTEIN 430"/>
    <property type="match status" value="1"/>
</dbReference>
<dbReference type="Pfam" id="PF01352">
    <property type="entry name" value="KRAB"/>
    <property type="match status" value="1"/>
</dbReference>
<dbReference type="Pfam" id="PF00096">
    <property type="entry name" value="zf-C2H2"/>
    <property type="match status" value="13"/>
</dbReference>
<dbReference type="SMART" id="SM00349">
    <property type="entry name" value="KRAB"/>
    <property type="match status" value="1"/>
</dbReference>
<dbReference type="SMART" id="SM00355">
    <property type="entry name" value="ZnF_C2H2"/>
    <property type="match status" value="13"/>
</dbReference>
<dbReference type="SUPFAM" id="SSF57667">
    <property type="entry name" value="beta-beta-alpha zinc fingers"/>
    <property type="match status" value="7"/>
</dbReference>
<dbReference type="SUPFAM" id="SSF109640">
    <property type="entry name" value="KRAB domain (Kruppel-associated box)"/>
    <property type="match status" value="1"/>
</dbReference>
<dbReference type="PROSITE" id="PS50805">
    <property type="entry name" value="KRAB"/>
    <property type="match status" value="1"/>
</dbReference>
<dbReference type="PROSITE" id="PS00028">
    <property type="entry name" value="ZINC_FINGER_C2H2_1"/>
    <property type="match status" value="13"/>
</dbReference>
<dbReference type="PROSITE" id="PS50157">
    <property type="entry name" value="ZINC_FINGER_C2H2_2"/>
    <property type="match status" value="13"/>
</dbReference>
<reference key="1">
    <citation type="journal article" date="2004" name="Nature">
        <title>The DNA sequence and biology of human chromosome 19.</title>
        <authorList>
            <person name="Grimwood J."/>
            <person name="Gordon L.A."/>
            <person name="Olsen A.S."/>
            <person name="Terry A."/>
            <person name="Schmutz J."/>
            <person name="Lamerdin J.E."/>
            <person name="Hellsten U."/>
            <person name="Goodstein D."/>
            <person name="Couronne O."/>
            <person name="Tran-Gyamfi M."/>
            <person name="Aerts A."/>
            <person name="Altherr M."/>
            <person name="Ashworth L."/>
            <person name="Bajorek E."/>
            <person name="Black S."/>
            <person name="Branscomb E."/>
            <person name="Caenepeel S."/>
            <person name="Carrano A.V."/>
            <person name="Caoile C."/>
            <person name="Chan Y.M."/>
            <person name="Christensen M."/>
            <person name="Cleland C.A."/>
            <person name="Copeland A."/>
            <person name="Dalin E."/>
            <person name="Dehal P."/>
            <person name="Denys M."/>
            <person name="Detter J.C."/>
            <person name="Escobar J."/>
            <person name="Flowers D."/>
            <person name="Fotopulos D."/>
            <person name="Garcia C."/>
            <person name="Georgescu A.M."/>
            <person name="Glavina T."/>
            <person name="Gomez M."/>
            <person name="Gonzales E."/>
            <person name="Groza M."/>
            <person name="Hammon N."/>
            <person name="Hawkins T."/>
            <person name="Haydu L."/>
            <person name="Ho I."/>
            <person name="Huang W."/>
            <person name="Israni S."/>
            <person name="Jett J."/>
            <person name="Kadner K."/>
            <person name="Kimball H."/>
            <person name="Kobayashi A."/>
            <person name="Larionov V."/>
            <person name="Leem S.-H."/>
            <person name="Lopez F."/>
            <person name="Lou Y."/>
            <person name="Lowry S."/>
            <person name="Malfatti S."/>
            <person name="Martinez D."/>
            <person name="McCready P.M."/>
            <person name="Medina C."/>
            <person name="Morgan J."/>
            <person name="Nelson K."/>
            <person name="Nolan M."/>
            <person name="Ovcharenko I."/>
            <person name="Pitluck S."/>
            <person name="Pollard M."/>
            <person name="Popkie A.P."/>
            <person name="Predki P."/>
            <person name="Quan G."/>
            <person name="Ramirez L."/>
            <person name="Rash S."/>
            <person name="Retterer J."/>
            <person name="Rodriguez A."/>
            <person name="Rogers S."/>
            <person name="Salamov A."/>
            <person name="Salazar A."/>
            <person name="She X."/>
            <person name="Smith D."/>
            <person name="Slezak T."/>
            <person name="Solovyev V."/>
            <person name="Thayer N."/>
            <person name="Tice H."/>
            <person name="Tsai M."/>
            <person name="Ustaszewska A."/>
            <person name="Vo N."/>
            <person name="Wagner M."/>
            <person name="Wheeler J."/>
            <person name="Wu K."/>
            <person name="Xie G."/>
            <person name="Yang J."/>
            <person name="Dubchak I."/>
            <person name="Furey T.S."/>
            <person name="DeJong P."/>
            <person name="Dickson M."/>
            <person name="Gordon D."/>
            <person name="Eichler E.E."/>
            <person name="Pennacchio L.A."/>
            <person name="Richardson P."/>
            <person name="Stubbs L."/>
            <person name="Rokhsar D.S."/>
            <person name="Myers R.M."/>
            <person name="Rubin E.M."/>
            <person name="Lucas S.M."/>
        </authorList>
    </citation>
    <scope>NUCLEOTIDE SEQUENCE [LARGE SCALE GENOMIC DNA]</scope>
</reference>
<reference key="2">
    <citation type="submission" date="2004-02" db="EMBL/GenBank/DDBJ databases">
        <authorList>
            <person name="Wambutt R."/>
            <person name="Heubner D."/>
            <person name="Mewes H.W."/>
            <person name="Weil B."/>
            <person name="Amid C."/>
            <person name="Osanger A."/>
            <person name="Fobo G."/>
            <person name="Han M."/>
            <person name="Wiemann S."/>
        </authorList>
    </citation>
    <scope>NUCLEOTIDE SEQUENCE [LARGE SCALE MRNA] OF 1-148</scope>
</reference>
<reference key="3">
    <citation type="journal article" date="2004" name="Genome Res.">
        <title>The status, quality, and expansion of the NIH full-length cDNA project: the Mammalian Gene Collection (MGC).</title>
        <authorList>
            <consortium name="The MGC Project Team"/>
        </authorList>
    </citation>
    <scope>NUCLEOTIDE SEQUENCE [LARGE SCALE MRNA] OF 31-572</scope>
</reference>
<reference key="4">
    <citation type="journal article" date="1993" name="EMBO J.">
        <title>Clustered organization of homologous KRAB zinc-finger genes with enhanced expression in human T lymphoid cells.</title>
        <authorList>
            <person name="Bellefroid E.J."/>
            <person name="Marine J.-C."/>
            <person name="Ried T."/>
            <person name="Lecocq P.J."/>
            <person name="Riviere M."/>
            <person name="Amemiya C.T."/>
            <person name="Poncelet D.A."/>
            <person name="Coulie P.G."/>
            <person name="de Jong P.J."/>
            <person name="Szpirer C."/>
            <person name="Ward D.C."/>
            <person name="Martial J.A."/>
        </authorList>
    </citation>
    <scope>PARTIAL NUCLEOTIDE SEQUENCE [MRNA]</scope>
</reference>
<evidence type="ECO:0000255" key="1">
    <source>
        <dbReference type="PROSITE-ProRule" id="PRU00042"/>
    </source>
</evidence>
<evidence type="ECO:0000255" key="2">
    <source>
        <dbReference type="PROSITE-ProRule" id="PRU00119"/>
    </source>
</evidence>
<evidence type="ECO:0000305" key="3"/>
<organism>
    <name type="scientific">Homo sapiens</name>
    <name type="common">Human</name>
    <dbReference type="NCBI Taxonomy" id="9606"/>
    <lineage>
        <taxon>Eukaryota</taxon>
        <taxon>Metazoa</taxon>
        <taxon>Chordata</taxon>
        <taxon>Craniata</taxon>
        <taxon>Vertebrata</taxon>
        <taxon>Euteleostomi</taxon>
        <taxon>Mammalia</taxon>
        <taxon>Eutheria</taxon>
        <taxon>Euarchontoglires</taxon>
        <taxon>Primates</taxon>
        <taxon>Haplorrhini</taxon>
        <taxon>Catarrhini</taxon>
        <taxon>Hominidae</taxon>
        <taxon>Homo</taxon>
    </lineage>
</organism>
<comment type="function">
    <text>May be involved in transcriptional regulation.</text>
</comment>
<comment type="subcellular location">
    <subcellularLocation>
        <location evidence="3">Nucleus</location>
    </subcellularLocation>
</comment>
<comment type="similarity">
    <text evidence="3">Belongs to the krueppel C2H2-type zinc-finger protein family.</text>
</comment>
<comment type="sequence caution" evidence="3">
    <conflict type="erroneous initiation">
        <sequence resource="EMBL-CDS" id="AAI10577"/>
    </conflict>
    <text>Truncated N-terminus.</text>
</comment>
<comment type="sequence caution" evidence="3">
    <conflict type="erroneous initiation">
        <sequence resource="EMBL-CDS" id="AAI29811"/>
    </conflict>
    <text>Truncated N-terminus.</text>
</comment>
<protein>
    <recommendedName>
        <fullName>Zinc finger protein 98</fullName>
    </recommendedName>
    <alternativeName>
        <fullName>Zinc finger protein 739</fullName>
    </alternativeName>
    <alternativeName>
        <fullName>Zinc finger protein F7175</fullName>
    </alternativeName>
</protein>
<sequence>MPGPLGSLEMGVLTFRDVALEFSLEEWQCLDTAQQNLYRNVMLENYRNLVFVGIAASKPDLITCLEQGKEPWNVKRHEMVTEPPVVYSYFAQDLWPKQGKKNYFQKVILRTYKKCGRENLQLRKYCKSMDECKVHKECYNGLNQCLTTTQNKIFQYDKYVKVFHKFSNSNRHKIGHTGKKSFKCKECEKSFCMLSHLAQHKRIHSGEKPYKCKECGKAYNEASNLSTHKRIHTGKKPYKCEECGKAFNRLSHLTTHKIIHTGKKPYKCEECGKAFNQSANLTTHKRIHTGEKPYKCEECGRAFSQSSTLTAHKIIHAGEKPYKCEECGKAFSQSSTLTTHKIIHTGEKFYKCEECGKAFSRLSHLTTHKRIHSGEKPYKCEECGKAFKQSSTLTTHKRIHAGEKFYKCEVCSKAFSRFSHLTTHKRIHTGEKPYKCEECGKAFNLSSQLTTHKIIHTGEKPYKCEECGKAFNQSSTLSKHKVIHTGEKPYKCEECGKAFNQSSHLTTHKMIHTGEKPYKCEECGKAFNNSSILNRHKMIHTGEKLYKPESCNNACDNIAKISKYKRNCAGEK</sequence>
<name>ZNF98_HUMAN</name>
<gene>
    <name type="primary">ZNF98</name>
    <name type="synonym">ZNF739</name>
</gene>